<gene>
    <name type="primary">RGT1</name>
    <name type="ordered locus">KLLA0F25630g</name>
</gene>
<protein>
    <recommendedName>
        <fullName>Glucose transport transcription regulator RGT1</fullName>
    </recommendedName>
    <alternativeName>
        <fullName>Restores glucose transport protein 1</fullName>
    </alternativeName>
</protein>
<name>RGT1_KLULA</name>
<reference key="1">
    <citation type="journal article" date="2004" name="Nature">
        <title>Genome evolution in yeasts.</title>
        <authorList>
            <person name="Dujon B."/>
            <person name="Sherman D."/>
            <person name="Fischer G."/>
            <person name="Durrens P."/>
            <person name="Casaregola S."/>
            <person name="Lafontaine I."/>
            <person name="de Montigny J."/>
            <person name="Marck C."/>
            <person name="Neuveglise C."/>
            <person name="Talla E."/>
            <person name="Goffard N."/>
            <person name="Frangeul L."/>
            <person name="Aigle M."/>
            <person name="Anthouard V."/>
            <person name="Babour A."/>
            <person name="Barbe V."/>
            <person name="Barnay S."/>
            <person name="Blanchin S."/>
            <person name="Beckerich J.-M."/>
            <person name="Beyne E."/>
            <person name="Bleykasten C."/>
            <person name="Boisrame A."/>
            <person name="Boyer J."/>
            <person name="Cattolico L."/>
            <person name="Confanioleri F."/>
            <person name="de Daruvar A."/>
            <person name="Despons L."/>
            <person name="Fabre E."/>
            <person name="Fairhead C."/>
            <person name="Ferry-Dumazet H."/>
            <person name="Groppi A."/>
            <person name="Hantraye F."/>
            <person name="Hennequin C."/>
            <person name="Jauniaux N."/>
            <person name="Joyet P."/>
            <person name="Kachouri R."/>
            <person name="Kerrest A."/>
            <person name="Koszul R."/>
            <person name="Lemaire M."/>
            <person name="Lesur I."/>
            <person name="Ma L."/>
            <person name="Muller H."/>
            <person name="Nicaud J.-M."/>
            <person name="Nikolski M."/>
            <person name="Oztas S."/>
            <person name="Ozier-Kalogeropoulos O."/>
            <person name="Pellenz S."/>
            <person name="Potier S."/>
            <person name="Richard G.-F."/>
            <person name="Straub M.-L."/>
            <person name="Suleau A."/>
            <person name="Swennen D."/>
            <person name="Tekaia F."/>
            <person name="Wesolowski-Louvel M."/>
            <person name="Westhof E."/>
            <person name="Wirth B."/>
            <person name="Zeniou-Meyer M."/>
            <person name="Zivanovic Y."/>
            <person name="Bolotin-Fukuhara M."/>
            <person name="Thierry A."/>
            <person name="Bouchier C."/>
            <person name="Caudron B."/>
            <person name="Scarpelli C."/>
            <person name="Gaillardin C."/>
            <person name="Weissenbach J."/>
            <person name="Wincker P."/>
            <person name="Souciet J.-L."/>
        </authorList>
    </citation>
    <scope>NUCLEOTIDE SEQUENCE [LARGE SCALE GENOMIC DNA]</scope>
    <source>
        <strain>ATCC 8585 / CBS 2359 / DSM 70799 / NBRC 1267 / NRRL Y-1140 / WM37</strain>
    </source>
</reference>
<comment type="function">
    <text evidence="1">Glucose-responsive transcription factor that regulates expression of several glucose transporter (HXT) genes in response to glucose. In the absence of glucose, it functions as a transcriptional repressor, whereas high concentrations of glucose cause it to function as a transcriptional activator. In cells growing on low levels of glucose, has a neutral role, neither repressing nor activating transcription (By similarity).</text>
</comment>
<comment type="subcellular location">
    <subcellularLocation>
        <location evidence="2">Nucleus</location>
    </subcellularLocation>
    <subcellularLocation>
        <location evidence="1">Cytoplasm</location>
    </subcellularLocation>
</comment>
<comment type="similarity">
    <text evidence="4">Belongs to the EDS1/RGT1 family.</text>
</comment>
<accession>Q6CIL8</accession>
<organism>
    <name type="scientific">Kluyveromyces lactis (strain ATCC 8585 / CBS 2359 / DSM 70799 / NBRC 1267 / NRRL Y-1140 / WM37)</name>
    <name type="common">Yeast</name>
    <name type="synonym">Candida sphaerica</name>
    <dbReference type="NCBI Taxonomy" id="284590"/>
    <lineage>
        <taxon>Eukaryota</taxon>
        <taxon>Fungi</taxon>
        <taxon>Dikarya</taxon>
        <taxon>Ascomycota</taxon>
        <taxon>Saccharomycotina</taxon>
        <taxon>Saccharomycetes</taxon>
        <taxon>Saccharomycetales</taxon>
        <taxon>Saccharomycetaceae</taxon>
        <taxon>Kluyveromyces</taxon>
    </lineage>
</organism>
<dbReference type="EMBL" id="CR382126">
    <property type="protein sequence ID" value="CAG98929.1"/>
    <property type="molecule type" value="Genomic_DNA"/>
</dbReference>
<dbReference type="RefSeq" id="XP_456221.1">
    <property type="nucleotide sequence ID" value="XM_456221.1"/>
</dbReference>
<dbReference type="FunCoup" id="Q6CIL8">
    <property type="interactions" value="382"/>
</dbReference>
<dbReference type="STRING" id="284590.Q6CIL8"/>
<dbReference type="PaxDb" id="284590-Q6CIL8"/>
<dbReference type="KEGG" id="kla:KLLA0_F25630g"/>
<dbReference type="eggNOG" id="ENOG502QRVJ">
    <property type="taxonomic scope" value="Eukaryota"/>
</dbReference>
<dbReference type="HOGENOM" id="CLU_006525_0_0_1"/>
<dbReference type="InParanoid" id="Q6CIL8"/>
<dbReference type="OMA" id="WFRNSLE"/>
<dbReference type="Proteomes" id="UP000000598">
    <property type="component" value="Chromosome F"/>
</dbReference>
<dbReference type="GO" id="GO:0005737">
    <property type="term" value="C:cytoplasm"/>
    <property type="evidence" value="ECO:0007669"/>
    <property type="project" value="UniProtKB-SubCell"/>
</dbReference>
<dbReference type="GO" id="GO:0005634">
    <property type="term" value="C:nucleus"/>
    <property type="evidence" value="ECO:0007669"/>
    <property type="project" value="UniProtKB-SubCell"/>
</dbReference>
<dbReference type="GO" id="GO:0003677">
    <property type="term" value="F:DNA binding"/>
    <property type="evidence" value="ECO:0007669"/>
    <property type="project" value="UniProtKB-KW"/>
</dbReference>
<dbReference type="GO" id="GO:0000981">
    <property type="term" value="F:DNA-binding transcription factor activity, RNA polymerase II-specific"/>
    <property type="evidence" value="ECO:0007669"/>
    <property type="project" value="InterPro"/>
</dbReference>
<dbReference type="GO" id="GO:0008270">
    <property type="term" value="F:zinc ion binding"/>
    <property type="evidence" value="ECO:0007669"/>
    <property type="project" value="InterPro"/>
</dbReference>
<dbReference type="CDD" id="cd00067">
    <property type="entry name" value="GAL4"/>
    <property type="match status" value="1"/>
</dbReference>
<dbReference type="Gene3D" id="4.10.240.10">
    <property type="entry name" value="Zn(2)-C6 fungal-type DNA-binding domain"/>
    <property type="match status" value="1"/>
</dbReference>
<dbReference type="InterPro" id="IPR050797">
    <property type="entry name" value="Carb_Metab_Trans_Reg"/>
</dbReference>
<dbReference type="InterPro" id="IPR036864">
    <property type="entry name" value="Zn2-C6_fun-type_DNA-bd_sf"/>
</dbReference>
<dbReference type="InterPro" id="IPR001138">
    <property type="entry name" value="Zn2Cys6_DnaBD"/>
</dbReference>
<dbReference type="PANTHER" id="PTHR31668:SF26">
    <property type="entry name" value="GLUCOSE TRANSPORT TRANSCRIPTION REGULATOR RGT1-RELATED"/>
    <property type="match status" value="1"/>
</dbReference>
<dbReference type="PANTHER" id="PTHR31668">
    <property type="entry name" value="GLUCOSE TRANSPORT TRANSCRIPTION REGULATOR RGT1-RELATED-RELATED"/>
    <property type="match status" value="1"/>
</dbReference>
<dbReference type="Pfam" id="PF00172">
    <property type="entry name" value="Zn_clus"/>
    <property type="match status" value="1"/>
</dbReference>
<dbReference type="SMART" id="SM00066">
    <property type="entry name" value="GAL4"/>
    <property type="match status" value="1"/>
</dbReference>
<dbReference type="SUPFAM" id="SSF57701">
    <property type="entry name" value="Zn2/Cys6 DNA-binding domain"/>
    <property type="match status" value="1"/>
</dbReference>
<dbReference type="PROSITE" id="PS50048">
    <property type="entry name" value="ZN2_CY6_FUNGAL_2"/>
    <property type="match status" value="1"/>
</dbReference>
<evidence type="ECO:0000250" key="1"/>
<evidence type="ECO:0000255" key="2">
    <source>
        <dbReference type="PROSITE-ProRule" id="PRU00227"/>
    </source>
</evidence>
<evidence type="ECO:0000256" key="3">
    <source>
        <dbReference type="SAM" id="MobiDB-lite"/>
    </source>
</evidence>
<evidence type="ECO:0000305" key="4"/>
<feature type="chain" id="PRO_0000408014" description="Glucose transport transcription regulator RGT1">
    <location>
        <begin position="1"/>
        <end position="1007"/>
    </location>
</feature>
<feature type="DNA-binding region" description="Zn(2)-C6 fungal-type" evidence="2">
    <location>
        <begin position="117"/>
        <end position="151"/>
    </location>
</feature>
<feature type="region of interest" description="Disordered" evidence="3">
    <location>
        <begin position="1"/>
        <end position="115"/>
    </location>
</feature>
<feature type="region of interest" description="Disordered" evidence="3">
    <location>
        <begin position="155"/>
        <end position="224"/>
    </location>
</feature>
<feature type="region of interest" description="Disordered" evidence="3">
    <location>
        <begin position="267"/>
        <end position="350"/>
    </location>
</feature>
<feature type="region of interest" description="Disordered" evidence="3">
    <location>
        <begin position="399"/>
        <end position="423"/>
    </location>
</feature>
<feature type="region of interest" description="Disordered" evidence="3">
    <location>
        <begin position="462"/>
        <end position="496"/>
    </location>
</feature>
<feature type="compositionally biased region" description="Polar residues" evidence="3">
    <location>
        <begin position="1"/>
        <end position="11"/>
    </location>
</feature>
<feature type="compositionally biased region" description="Low complexity" evidence="3">
    <location>
        <begin position="21"/>
        <end position="33"/>
    </location>
</feature>
<feature type="compositionally biased region" description="Polar residues" evidence="3">
    <location>
        <begin position="42"/>
        <end position="65"/>
    </location>
</feature>
<feature type="compositionally biased region" description="Polar residues" evidence="3">
    <location>
        <begin position="74"/>
        <end position="83"/>
    </location>
</feature>
<feature type="compositionally biased region" description="Polar residues" evidence="3">
    <location>
        <begin position="96"/>
        <end position="105"/>
    </location>
</feature>
<feature type="compositionally biased region" description="Polar residues" evidence="3">
    <location>
        <begin position="196"/>
        <end position="206"/>
    </location>
</feature>
<feature type="compositionally biased region" description="Polar residues" evidence="3">
    <location>
        <begin position="274"/>
        <end position="288"/>
    </location>
</feature>
<feature type="compositionally biased region" description="Low complexity" evidence="3">
    <location>
        <begin position="289"/>
        <end position="303"/>
    </location>
</feature>
<feature type="compositionally biased region" description="Polar residues" evidence="3">
    <location>
        <begin position="304"/>
        <end position="323"/>
    </location>
</feature>
<feature type="compositionally biased region" description="Polar residues" evidence="3">
    <location>
        <begin position="329"/>
        <end position="339"/>
    </location>
</feature>
<feature type="compositionally biased region" description="Polar residues" evidence="3">
    <location>
        <begin position="404"/>
        <end position="419"/>
    </location>
</feature>
<feature type="compositionally biased region" description="Basic residues" evidence="3">
    <location>
        <begin position="473"/>
        <end position="489"/>
    </location>
</feature>
<sequence>MLSALIQNGMSKSGDPTDVENNTTNGSSSTTDNANDVGRGVNTENNSKLENDSSNAATITTSKQDPSAVDEATTPRSINTGASTVPEPDNTRRDSVSSNVSTATTESRRRSKVSRACDQCRKKKIKCDFIEGHDINPDQSCTGCRKIGEKCSFERIPLKRGPSKGYTRSNSQSRERRGSQRRRSSSEVSQKGKKPSVSNPVNAVNESKSEVDASLHPGQSATSTTNVSLHPLLQYLPGMNHSAVSASSPSALQQPFWKVPYHEYQNQRRPSLDSLASDSSQKPGGKTNQQQPLPSQSQPQSLQNIGNSRSNTGPLPTQDTFRNQRYYYQPSQDSVSEAGSDNRRGSSAIPPLLNPAIQLQQQQYSYSQFAIAQQQQQQQQQQQQQQLQLQQHLQQQHQLQQQQSLHSPQANTMNASTGISNGGFVPYSGNKGLPSGGHVLERTDSVASDAMSLNASPNIYTAEVESAPASPVQKKRKRSNRSSTSKKGKSTQQNLPATTPTLINYGQIADAQLIDTYYAYIHLRFPIIPINKDTLTNDLLLVNTQPISELHELNNYILLWFRNSLELLIRICLKDKESEEILYQQSTFVSAINECFQKIVDIHPRFRDLETQIDEKIATIYLVTFIILNCTLALVSYNNSFVLGMSVIIFNELKLWKNFIFGNWNTVTGHDKICLRLYFELNTFDSLQSCSFGVPKLMNLKLDETTASKLFYDEVSNDGTGQETDKWNVDEDPERIRIIVDNMELGYFLSRLCQARRSSFEKPLPLVGEHNENKTIPGLFRAFLSIKRQFTDTLLDLPDAEGKLPEMTPELVTRLSNMICDLTTTIHDLLKLNVEVNPTNCLELFPDNSMQTVDESSAHNSAAQSSDPSNIEVGTVSPYVIAIYKDLFNVVELIKNMPTSLIGCVMGTQAPNFDSQPLVLQLSQCMNNMLQITTFTSSLSPFKIFKHELNAQSKNKTIDAVPLWKQKMKSSLAPLQTAITPQEIMMAQFIDIAWCIADTEELGWFNQ</sequence>
<proteinExistence type="inferred from homology"/>
<keyword id="KW-0010">Activator</keyword>
<keyword id="KW-0963">Cytoplasm</keyword>
<keyword id="KW-0238">DNA-binding</keyword>
<keyword id="KW-0479">Metal-binding</keyword>
<keyword id="KW-0539">Nucleus</keyword>
<keyword id="KW-1185">Reference proteome</keyword>
<keyword id="KW-0678">Repressor</keyword>
<keyword id="KW-0804">Transcription</keyword>
<keyword id="KW-0805">Transcription regulation</keyword>
<keyword id="KW-0862">Zinc</keyword>